<sequence>MESDKMMPGGLTEARPATPEIQEIATTVKSQLEEKTNKTYEKFEAVEYKSQVVAGINYYIKVHVGGNSYVHIKVFKSLPYQNKPLELSGYQVDKTKDDELTGF</sequence>
<protein>
    <recommendedName>
        <fullName>Cystatin-A1</fullName>
    </recommendedName>
    <alternativeName>
        <fullName>Stefin-A1</fullName>
    </alternativeName>
</protein>
<comment type="function">
    <text>This is an intracellular thiol proteinase inhibitor.</text>
</comment>
<comment type="subcellular location">
    <subcellularLocation>
        <location>Cytoplasm</location>
    </subcellularLocation>
</comment>
<comment type="similarity">
    <text evidence="2">Belongs to the cystatin family.</text>
</comment>
<organism>
    <name type="scientific">Sus scrofa</name>
    <name type="common">Pig</name>
    <dbReference type="NCBI Taxonomy" id="9823"/>
    <lineage>
        <taxon>Eukaryota</taxon>
        <taxon>Metazoa</taxon>
        <taxon>Chordata</taxon>
        <taxon>Craniata</taxon>
        <taxon>Vertebrata</taxon>
        <taxon>Euteleostomi</taxon>
        <taxon>Mammalia</taxon>
        <taxon>Eutheria</taxon>
        <taxon>Laurasiatheria</taxon>
        <taxon>Artiodactyla</taxon>
        <taxon>Suina</taxon>
        <taxon>Suidae</taxon>
        <taxon>Sus</taxon>
    </lineage>
</organism>
<name>CYTA1_PIG</name>
<proteinExistence type="evidence at protein level"/>
<dbReference type="EMBL" id="U41734">
    <property type="protein sequence ID" value="AAB03263.1"/>
    <property type="molecule type" value="mRNA"/>
</dbReference>
<dbReference type="RefSeq" id="NP_999024.1">
    <property type="nucleotide sequence ID" value="NM_213859.1"/>
</dbReference>
<dbReference type="SMR" id="Q28988"/>
<dbReference type="FunCoup" id="Q28988">
    <property type="interactions" value="108"/>
</dbReference>
<dbReference type="MEROPS" id="I25.001"/>
<dbReference type="PaxDb" id="9823-ENSSSCP00000022174"/>
<dbReference type="PeptideAtlas" id="Q28988"/>
<dbReference type="Ensembl" id="ENSSSCT00045023122.1">
    <property type="protein sequence ID" value="ENSSSCP00045015966.1"/>
    <property type="gene ID" value="ENSSSCG00045013537.1"/>
</dbReference>
<dbReference type="Ensembl" id="ENSSSCT00115009251">
    <property type="protein sequence ID" value="ENSSSCP00115008694"/>
    <property type="gene ID" value="ENSSSCG00115005367"/>
</dbReference>
<dbReference type="GeneID" id="396866"/>
<dbReference type="KEGG" id="ssc:396866"/>
<dbReference type="eggNOG" id="ENOG502SF2X">
    <property type="taxonomic scope" value="Eukaryota"/>
</dbReference>
<dbReference type="InParanoid" id="Q28988"/>
<dbReference type="OrthoDB" id="2429551at2759"/>
<dbReference type="Reactome" id="R-SSC-6809371">
    <property type="pathway name" value="Formation of the cornified envelope"/>
</dbReference>
<dbReference type="Proteomes" id="UP000008227">
    <property type="component" value="Unplaced"/>
</dbReference>
<dbReference type="Proteomes" id="UP000314985">
    <property type="component" value="Unplaced"/>
</dbReference>
<dbReference type="Proteomes" id="UP000694570">
    <property type="component" value="Unplaced"/>
</dbReference>
<dbReference type="Proteomes" id="UP000694571">
    <property type="component" value="Unplaced"/>
</dbReference>
<dbReference type="Proteomes" id="UP000694720">
    <property type="component" value="Unplaced"/>
</dbReference>
<dbReference type="Proteomes" id="UP000694722">
    <property type="component" value="Unplaced"/>
</dbReference>
<dbReference type="Proteomes" id="UP000694723">
    <property type="component" value="Unplaced"/>
</dbReference>
<dbReference type="Proteomes" id="UP000694724">
    <property type="component" value="Unplaced"/>
</dbReference>
<dbReference type="Proteomes" id="UP000694725">
    <property type="component" value="Unplaced"/>
</dbReference>
<dbReference type="Proteomes" id="UP000694726">
    <property type="component" value="Unplaced"/>
</dbReference>
<dbReference type="Proteomes" id="UP000694727">
    <property type="component" value="Unplaced"/>
</dbReference>
<dbReference type="Proteomes" id="UP000694728">
    <property type="component" value="Unplaced"/>
</dbReference>
<dbReference type="GO" id="GO:0005829">
    <property type="term" value="C:cytosol"/>
    <property type="evidence" value="ECO:0000318"/>
    <property type="project" value="GO_Central"/>
</dbReference>
<dbReference type="GO" id="GO:0004869">
    <property type="term" value="F:cysteine-type endopeptidase inhibitor activity"/>
    <property type="evidence" value="ECO:0000318"/>
    <property type="project" value="GO_Central"/>
</dbReference>
<dbReference type="CDD" id="cd00042">
    <property type="entry name" value="CY"/>
    <property type="match status" value="1"/>
</dbReference>
<dbReference type="FunFam" id="3.10.450.10:FF:000001">
    <property type="entry name" value="Cystatin-A"/>
    <property type="match status" value="1"/>
</dbReference>
<dbReference type="Gene3D" id="3.10.450.10">
    <property type="match status" value="1"/>
</dbReference>
<dbReference type="InterPro" id="IPR000010">
    <property type="entry name" value="Cystatin_dom"/>
</dbReference>
<dbReference type="InterPro" id="IPR046350">
    <property type="entry name" value="Cystatin_sf"/>
</dbReference>
<dbReference type="InterPro" id="IPR018073">
    <property type="entry name" value="Prot_inh_cystat_CS"/>
</dbReference>
<dbReference type="InterPro" id="IPR001713">
    <property type="entry name" value="Prot_inh_stefin"/>
</dbReference>
<dbReference type="PANTHER" id="PTHR11414">
    <property type="entry name" value="CYSTATIN FAMILY MEMBER"/>
    <property type="match status" value="1"/>
</dbReference>
<dbReference type="PANTHER" id="PTHR11414:SF20">
    <property type="entry name" value="CYSTATIN-A"/>
    <property type="match status" value="1"/>
</dbReference>
<dbReference type="Pfam" id="PF00031">
    <property type="entry name" value="Cystatin"/>
    <property type="match status" value="1"/>
</dbReference>
<dbReference type="PRINTS" id="PR00295">
    <property type="entry name" value="STEFINA"/>
</dbReference>
<dbReference type="SMART" id="SM00043">
    <property type="entry name" value="CY"/>
    <property type="match status" value="1"/>
</dbReference>
<dbReference type="SUPFAM" id="SSF54403">
    <property type="entry name" value="Cystatin/monellin"/>
    <property type="match status" value="1"/>
</dbReference>
<dbReference type="PROSITE" id="PS00287">
    <property type="entry name" value="CYSTATIN"/>
    <property type="match status" value="1"/>
</dbReference>
<evidence type="ECO:0000250" key="1"/>
<evidence type="ECO:0000305" key="2"/>
<keyword id="KW-0963">Cytoplasm</keyword>
<keyword id="KW-0903">Direct protein sequencing</keyword>
<keyword id="KW-0646">Protease inhibitor</keyword>
<keyword id="KW-1185">Reference proteome</keyword>
<keyword id="KW-0789">Thiol protease inhibitor</keyword>
<accession>Q28988</accession>
<reference key="1">
    <citation type="submission" date="1995-12" db="EMBL/GenBank/DDBJ databases">
        <authorList>
            <person name="Pungercar J."/>
            <person name="Strukelj B."/>
        </authorList>
    </citation>
    <scope>NUCLEOTIDE SEQUENCE [MRNA]</scope>
    <source>
        <tissue>Bone marrow</tissue>
    </source>
</reference>
<reference key="2">
    <citation type="journal article" date="1996" name="FEBS Lett.">
        <title>Differences in specificity for the interactions of stefins A, B and D with cysteine proteinases.</title>
        <authorList>
            <person name="Lenarcic B."/>
            <person name="Krizaj I."/>
            <person name="Zunec P."/>
            <person name="Turk V."/>
        </authorList>
    </citation>
    <scope>PROTEIN SEQUENCE OF 3-103</scope>
    <source>
        <tissue>Skin</tissue>
    </source>
</reference>
<feature type="chain" id="PRO_0000207130" description="Cystatin-A1">
    <location>
        <begin position="1"/>
        <end position="103"/>
    </location>
</feature>
<feature type="short sequence motif" description="Secondary area of contact">
    <location>
        <begin position="51"/>
        <end position="55"/>
    </location>
</feature>
<feature type="site" description="Reactive site" evidence="1">
    <location>
        <position position="10"/>
    </location>
</feature>